<gene>
    <name evidence="1" type="primary">atpC</name>
    <name type="ordered locus">Daud_2136</name>
</gene>
<name>ATPE_DESAP</name>
<sequence>MAEATQKVSIVTPERVIYGDEARFVHVRGTDGDLGFLPGHTPLISSLRPGLLRIQKEGQWSTFVVAGGFVEVRDSRVVVLANAAERPEEIDLARAEKAKERAEKRLAAKDPEIDVVRAKAALARAVARIEAAGQIKR</sequence>
<keyword id="KW-0066">ATP synthesis</keyword>
<keyword id="KW-1003">Cell membrane</keyword>
<keyword id="KW-0139">CF(1)</keyword>
<keyword id="KW-0375">Hydrogen ion transport</keyword>
<keyword id="KW-0406">Ion transport</keyword>
<keyword id="KW-0472">Membrane</keyword>
<keyword id="KW-1185">Reference proteome</keyword>
<keyword id="KW-0813">Transport</keyword>
<feature type="chain" id="PRO_1000146324" description="ATP synthase epsilon chain">
    <location>
        <begin position="1"/>
        <end position="137"/>
    </location>
</feature>
<organism>
    <name type="scientific">Desulforudis audaxviator (strain MP104C)</name>
    <dbReference type="NCBI Taxonomy" id="477974"/>
    <lineage>
        <taxon>Bacteria</taxon>
        <taxon>Bacillati</taxon>
        <taxon>Bacillota</taxon>
        <taxon>Clostridia</taxon>
        <taxon>Thermoanaerobacterales</taxon>
        <taxon>Candidatus Desulforudaceae</taxon>
        <taxon>Candidatus Desulforudis</taxon>
    </lineage>
</organism>
<reference key="1">
    <citation type="submission" date="2007-10" db="EMBL/GenBank/DDBJ databases">
        <title>Complete sequence of chromosome of Desulforudis audaxviator MP104C.</title>
        <authorList>
            <person name="Copeland A."/>
            <person name="Lucas S."/>
            <person name="Lapidus A."/>
            <person name="Barry K."/>
            <person name="Glavina del Rio T."/>
            <person name="Dalin E."/>
            <person name="Tice H."/>
            <person name="Bruce D."/>
            <person name="Pitluck S."/>
            <person name="Lowry S.R."/>
            <person name="Larimer F."/>
            <person name="Land M.L."/>
            <person name="Hauser L."/>
            <person name="Kyrpides N."/>
            <person name="Ivanova N.N."/>
            <person name="Richardson P."/>
        </authorList>
    </citation>
    <scope>NUCLEOTIDE SEQUENCE [LARGE SCALE GENOMIC DNA]</scope>
    <source>
        <strain>MP104C</strain>
    </source>
</reference>
<evidence type="ECO:0000255" key="1">
    <source>
        <dbReference type="HAMAP-Rule" id="MF_00530"/>
    </source>
</evidence>
<proteinExistence type="inferred from homology"/>
<protein>
    <recommendedName>
        <fullName evidence="1">ATP synthase epsilon chain</fullName>
    </recommendedName>
    <alternativeName>
        <fullName evidence="1">ATP synthase F1 sector epsilon subunit</fullName>
    </alternativeName>
    <alternativeName>
        <fullName evidence="1">F-ATPase epsilon subunit</fullName>
    </alternativeName>
</protein>
<comment type="function">
    <text evidence="1">Produces ATP from ADP in the presence of a proton gradient across the membrane.</text>
</comment>
<comment type="subunit">
    <text evidence="1">F-type ATPases have 2 components, CF(1) - the catalytic core - and CF(0) - the membrane proton channel. CF(1) has five subunits: alpha(3), beta(3), gamma(1), delta(1), epsilon(1). CF(0) has three main subunits: a, b and c.</text>
</comment>
<comment type="subcellular location">
    <subcellularLocation>
        <location evidence="1">Cell membrane</location>
        <topology evidence="1">Peripheral membrane protein</topology>
    </subcellularLocation>
</comment>
<comment type="similarity">
    <text evidence="1">Belongs to the ATPase epsilon chain family.</text>
</comment>
<accession>B1I6J6</accession>
<dbReference type="EMBL" id="CP000860">
    <property type="protein sequence ID" value="ACA60623.1"/>
    <property type="molecule type" value="Genomic_DNA"/>
</dbReference>
<dbReference type="RefSeq" id="WP_012303198.1">
    <property type="nucleotide sequence ID" value="NC_010424.1"/>
</dbReference>
<dbReference type="SMR" id="B1I6J6"/>
<dbReference type="STRING" id="477974.Daud_2136"/>
<dbReference type="KEGG" id="dau:Daud_2136"/>
<dbReference type="eggNOG" id="COG0355">
    <property type="taxonomic scope" value="Bacteria"/>
</dbReference>
<dbReference type="HOGENOM" id="CLU_084338_1_3_9"/>
<dbReference type="OrthoDB" id="9804110at2"/>
<dbReference type="Proteomes" id="UP000008544">
    <property type="component" value="Chromosome"/>
</dbReference>
<dbReference type="GO" id="GO:0005886">
    <property type="term" value="C:plasma membrane"/>
    <property type="evidence" value="ECO:0007669"/>
    <property type="project" value="UniProtKB-SubCell"/>
</dbReference>
<dbReference type="GO" id="GO:0045259">
    <property type="term" value="C:proton-transporting ATP synthase complex"/>
    <property type="evidence" value="ECO:0007669"/>
    <property type="project" value="UniProtKB-KW"/>
</dbReference>
<dbReference type="GO" id="GO:0005524">
    <property type="term" value="F:ATP binding"/>
    <property type="evidence" value="ECO:0007669"/>
    <property type="project" value="UniProtKB-UniRule"/>
</dbReference>
<dbReference type="GO" id="GO:0046933">
    <property type="term" value="F:proton-transporting ATP synthase activity, rotational mechanism"/>
    <property type="evidence" value="ECO:0007669"/>
    <property type="project" value="UniProtKB-UniRule"/>
</dbReference>
<dbReference type="CDD" id="cd12152">
    <property type="entry name" value="F1-ATPase_delta"/>
    <property type="match status" value="1"/>
</dbReference>
<dbReference type="Gene3D" id="1.20.5.440">
    <property type="entry name" value="ATP synthase delta/epsilon subunit, C-terminal domain"/>
    <property type="match status" value="1"/>
</dbReference>
<dbReference type="Gene3D" id="2.60.15.10">
    <property type="entry name" value="F0F1 ATP synthase delta/epsilon subunit, N-terminal"/>
    <property type="match status" value="1"/>
</dbReference>
<dbReference type="HAMAP" id="MF_00530">
    <property type="entry name" value="ATP_synth_epsil_bac"/>
    <property type="match status" value="1"/>
</dbReference>
<dbReference type="InterPro" id="IPR036794">
    <property type="entry name" value="ATP_F1_dsu/esu_C_sf"/>
</dbReference>
<dbReference type="InterPro" id="IPR001469">
    <property type="entry name" value="ATP_synth_F1_dsu/esu"/>
</dbReference>
<dbReference type="InterPro" id="IPR020546">
    <property type="entry name" value="ATP_synth_F1_dsu/esu_N"/>
</dbReference>
<dbReference type="InterPro" id="IPR020547">
    <property type="entry name" value="ATP_synth_F1_esu_C"/>
</dbReference>
<dbReference type="InterPro" id="IPR036771">
    <property type="entry name" value="ATPsynth_dsu/esu_N"/>
</dbReference>
<dbReference type="NCBIfam" id="TIGR01216">
    <property type="entry name" value="ATP_synt_epsi"/>
    <property type="match status" value="1"/>
</dbReference>
<dbReference type="NCBIfam" id="NF001846">
    <property type="entry name" value="PRK00571.1-3"/>
    <property type="match status" value="1"/>
</dbReference>
<dbReference type="NCBIfam" id="NF009980">
    <property type="entry name" value="PRK13446.1"/>
    <property type="match status" value="1"/>
</dbReference>
<dbReference type="PANTHER" id="PTHR13822">
    <property type="entry name" value="ATP SYNTHASE DELTA/EPSILON CHAIN"/>
    <property type="match status" value="1"/>
</dbReference>
<dbReference type="PANTHER" id="PTHR13822:SF10">
    <property type="entry name" value="ATP SYNTHASE EPSILON CHAIN, CHLOROPLASTIC"/>
    <property type="match status" value="1"/>
</dbReference>
<dbReference type="Pfam" id="PF00401">
    <property type="entry name" value="ATP-synt_DE"/>
    <property type="match status" value="1"/>
</dbReference>
<dbReference type="Pfam" id="PF02823">
    <property type="entry name" value="ATP-synt_DE_N"/>
    <property type="match status" value="1"/>
</dbReference>
<dbReference type="SUPFAM" id="SSF46604">
    <property type="entry name" value="Epsilon subunit of F1F0-ATP synthase C-terminal domain"/>
    <property type="match status" value="1"/>
</dbReference>
<dbReference type="SUPFAM" id="SSF51344">
    <property type="entry name" value="Epsilon subunit of F1F0-ATP synthase N-terminal domain"/>
    <property type="match status" value="1"/>
</dbReference>